<name>ISAB_STAA8</name>
<accession>Q2FUX3</accession>
<reference key="1">
    <citation type="book" date="2006" name="Gram positive pathogens, 2nd edition">
        <title>The Staphylococcus aureus NCTC 8325 genome.</title>
        <editorList>
            <person name="Fischetti V."/>
            <person name="Novick R."/>
            <person name="Ferretti J."/>
            <person name="Portnoy D."/>
            <person name="Rood J."/>
        </editorList>
        <authorList>
            <person name="Gillaspy A.F."/>
            <person name="Worrell V."/>
            <person name="Orvis J."/>
            <person name="Roe B.A."/>
            <person name="Dyer D.W."/>
            <person name="Iandolo J.J."/>
        </authorList>
    </citation>
    <scope>NUCLEOTIDE SEQUENCE [LARGE SCALE GENOMIC DNA]</scope>
    <source>
        <strain>NCTC 8325 / PS 47</strain>
    </source>
</reference>
<reference key="2">
    <citation type="journal article" date="2005" name="Appl. Environ. Microbiol.">
        <title>Differential gene expression profiling of Staphylococcus aureus cultivated under biofilm and planktonic conditions.</title>
        <authorList>
            <person name="Resch A."/>
            <person name="Rosenstein R."/>
            <person name="Nerz C."/>
            <person name="Goetz F."/>
        </authorList>
    </citation>
    <scope>INDUCTION</scope>
</reference>
<dbReference type="EMBL" id="CP000253">
    <property type="protein sequence ID" value="ABD31961.1"/>
    <property type="molecule type" value="Genomic_DNA"/>
</dbReference>
<dbReference type="RefSeq" id="WP_001044560.1">
    <property type="nucleotide sequence ID" value="NZ_LS483365.1"/>
</dbReference>
<dbReference type="RefSeq" id="YP_501423.1">
    <property type="nucleotide sequence ID" value="NC_007795.1"/>
</dbReference>
<dbReference type="SMR" id="Q2FUX3"/>
<dbReference type="STRING" id="93061.SAOUHSC_02972"/>
<dbReference type="GeneID" id="3921673"/>
<dbReference type="KEGG" id="sao:SAOUHSC_02972"/>
<dbReference type="PATRIC" id="fig|93061.5.peg.2681"/>
<dbReference type="HOGENOM" id="CLU_119552_0_0_9"/>
<dbReference type="OrthoDB" id="2400330at2"/>
<dbReference type="PRO" id="PR:Q2FUX3"/>
<dbReference type="Proteomes" id="UP000008816">
    <property type="component" value="Chromosome"/>
</dbReference>
<dbReference type="GO" id="GO:0005576">
    <property type="term" value="C:extracellular region"/>
    <property type="evidence" value="ECO:0007669"/>
    <property type="project" value="UniProtKB-SubCell"/>
</dbReference>
<dbReference type="NCBIfam" id="NF047686">
    <property type="entry name" value="IsaB_fam"/>
    <property type="match status" value="1"/>
</dbReference>
<sequence>MNKTSKVCVAATLALGTLIGVTVVENSAPTSKQAQAAITPYYTYNGYIGNNANFILDKNFINAIKYDNVKFNGIKLAKTNTIKKVEKYDQTFKGVSAKGNEASQLQFVVKNNISLKDIQKAYGKDLKKENGKTKEADSGIFYYQNAKKTLGIWFVVDHNRVVEVTVGHTPYKTSK</sequence>
<organism>
    <name type="scientific">Staphylococcus aureus (strain NCTC 8325 / PS 47)</name>
    <dbReference type="NCBI Taxonomy" id="93061"/>
    <lineage>
        <taxon>Bacteria</taxon>
        <taxon>Bacillati</taxon>
        <taxon>Bacillota</taxon>
        <taxon>Bacilli</taxon>
        <taxon>Bacillales</taxon>
        <taxon>Staphylococcaceae</taxon>
        <taxon>Staphylococcus</taxon>
    </lineage>
</organism>
<proteinExistence type="evidence at transcript level"/>
<evidence type="ECO:0000250" key="1"/>
<evidence type="ECO:0000269" key="2">
    <source>
    </source>
</evidence>
<evidence type="ECO:0000305" key="3"/>
<keyword id="KW-1185">Reference proteome</keyword>
<keyword id="KW-0964">Secreted</keyword>
<keyword id="KW-0732">Signal</keyword>
<gene>
    <name type="primary">isaB</name>
    <name type="ordered locus">SAOUHSC_02972</name>
</gene>
<protein>
    <recommendedName>
        <fullName>Immunodominant staphylococcal antigen B</fullName>
    </recommendedName>
</protein>
<comment type="subcellular location">
    <subcellularLocation>
        <location evidence="1">Secreted</location>
    </subcellularLocation>
</comment>
<comment type="induction">
    <text evidence="2">Increased expression in vivo during human sepsis. Highly expressed under biofilm conditions after 24 hours of growth.</text>
</comment>
<comment type="similarity">
    <text evidence="3">Belongs to the IsaB family.</text>
</comment>
<feature type="signal peptide" evidence="1">
    <location>
        <begin position="1"/>
        <end position="36"/>
    </location>
</feature>
<feature type="chain" id="PRO_0000272663" description="Immunodominant staphylococcal antigen B">
    <location>
        <begin position="37"/>
        <end position="175"/>
    </location>
</feature>